<proteinExistence type="evidence at protein level"/>
<sequence>MTKDELTEEESLSGKDYLDPPPVKTFEVRELKKWSFYRAVIAEFIATLLFLYVTVLTVIGFKSQTDINAGGGACASVGLLGISWAFGGMIFILVYCTAGISGGHINPAVTFGLFLASKVSLVRAVSYMVAQCLGATCGVGLVKVFQSTYYNRYGGGANMLSDGYNVGVGVGAEIIGTFVLVYTVFSATDPKRNARDSHIPVLAPLPIGFSVFMVHLATIPITGTGINPARSFGAAVIYNNQKAWDDQWIFWVGPFVGAAIAAFYHQFVLRAGAMKAYGSVRSQLHELHA</sequence>
<feature type="chain" id="PRO_0000064056" description="Probable aquaporin PIP2-6">
    <location>
        <begin position="1"/>
        <end position="289"/>
    </location>
</feature>
<feature type="topological domain" description="Cytoplasmic" evidence="4">
    <location>
        <begin position="1"/>
        <end position="38"/>
    </location>
</feature>
<feature type="transmembrane region" description="Helical; Name=1" evidence="4">
    <location>
        <begin position="39"/>
        <end position="59"/>
    </location>
</feature>
<feature type="topological domain" description="Extracellular" evidence="4">
    <location>
        <begin position="60"/>
        <end position="80"/>
    </location>
</feature>
<feature type="transmembrane region" description="Helical; Name=2" evidence="4">
    <location>
        <begin position="81"/>
        <end position="101"/>
    </location>
</feature>
<feature type="topological domain" description="Cytoplasmic" evidence="4">
    <location>
        <begin position="102"/>
        <end position="124"/>
    </location>
</feature>
<feature type="transmembrane region" description="Helical; Name=3" evidence="4">
    <location>
        <begin position="125"/>
        <end position="145"/>
    </location>
</feature>
<feature type="topological domain" description="Extracellular" evidence="4">
    <location>
        <begin position="146"/>
        <end position="165"/>
    </location>
</feature>
<feature type="transmembrane region" description="Helical; Name=4" evidence="4">
    <location>
        <begin position="166"/>
        <end position="186"/>
    </location>
</feature>
<feature type="topological domain" description="Cytoplasmic" evidence="4">
    <location>
        <begin position="187"/>
        <end position="200"/>
    </location>
</feature>
<feature type="transmembrane region" description="Helical; Name=5" evidence="4">
    <location>
        <begin position="201"/>
        <end position="221"/>
    </location>
</feature>
<feature type="topological domain" description="Extracellular" evidence="4">
    <location>
        <begin position="222"/>
        <end position="248"/>
    </location>
</feature>
<feature type="transmembrane region" description="Helical; Name=6" evidence="4">
    <location>
        <begin position="249"/>
        <end position="269"/>
    </location>
</feature>
<feature type="topological domain" description="Cytoplasmic" evidence="4">
    <location>
        <begin position="270"/>
        <end position="289"/>
    </location>
</feature>
<feature type="short sequence motif" description="NPA 1">
    <location>
        <begin position="106"/>
        <end position="108"/>
    </location>
</feature>
<feature type="short sequence motif" description="NPA 2">
    <location>
        <begin position="227"/>
        <end position="229"/>
    </location>
</feature>
<feature type="modified residue" description="N-acetylmethionine" evidence="3">
    <location>
        <position position="1"/>
    </location>
</feature>
<feature type="modified residue" description="Phosphothreonine" evidence="7">
    <location>
        <position position="7"/>
    </location>
</feature>
<feature type="modified residue" description="Phosphoserine" evidence="7">
    <location>
        <position position="11"/>
    </location>
</feature>
<feature type="modified residue" description="Phosphoserine" evidence="2">
    <location>
        <position position="279"/>
    </location>
</feature>
<feature type="modified residue" description="Phosphoserine" evidence="2">
    <location>
        <position position="282"/>
    </location>
</feature>
<name>PIP26_ARATH</name>
<accession>Q9ZV07</accession>
<organism>
    <name type="scientific">Arabidopsis thaliana</name>
    <name type="common">Mouse-ear cress</name>
    <dbReference type="NCBI Taxonomy" id="3702"/>
    <lineage>
        <taxon>Eukaryota</taxon>
        <taxon>Viridiplantae</taxon>
        <taxon>Streptophyta</taxon>
        <taxon>Embryophyta</taxon>
        <taxon>Tracheophyta</taxon>
        <taxon>Spermatophyta</taxon>
        <taxon>Magnoliopsida</taxon>
        <taxon>eudicotyledons</taxon>
        <taxon>Gunneridae</taxon>
        <taxon>Pentapetalae</taxon>
        <taxon>rosids</taxon>
        <taxon>malvids</taxon>
        <taxon>Brassicales</taxon>
        <taxon>Brassicaceae</taxon>
        <taxon>Camelineae</taxon>
        <taxon>Arabidopsis</taxon>
    </lineage>
</organism>
<comment type="function">
    <text evidence="1">Aquaporins facilitate the transport of water and small neutral solutes across cell membranes.</text>
</comment>
<comment type="subcellular location">
    <subcellularLocation>
        <location evidence="1">Cell membrane</location>
        <topology evidence="1">Multi-pass membrane protein</topology>
    </subcellularLocation>
</comment>
<comment type="tissue specificity">
    <text evidence="5">Expressed above ground, and in flower buds.</text>
</comment>
<comment type="domain">
    <text>Aquaporins contain two tandem repeats each containing three membrane-spanning domains and a pore-forming loop with the signature motif Asn-Pro-Ala (NPA).</text>
</comment>
<comment type="similarity">
    <text evidence="6">Belongs to the MIP/aquaporin (TC 1.A.8) family. PIP (TC 1.A.8.11) subfamily.</text>
</comment>
<evidence type="ECO:0000250" key="1"/>
<evidence type="ECO:0000250" key="2">
    <source>
        <dbReference type="UniProtKB" id="P43286"/>
    </source>
</evidence>
<evidence type="ECO:0000250" key="3">
    <source>
        <dbReference type="UniProtKB" id="P61837"/>
    </source>
</evidence>
<evidence type="ECO:0000255" key="4"/>
<evidence type="ECO:0000269" key="5">
    <source>
    </source>
</evidence>
<evidence type="ECO:0000305" key="6"/>
<evidence type="ECO:0007744" key="7">
    <source>
    </source>
</evidence>
<gene>
    <name type="primary">PIP2-6</name>
    <name type="synonym">PIP2E</name>
    <name type="ordered locus">At2g39010</name>
    <name type="ORF">T7F6.18</name>
</gene>
<dbReference type="EMBL" id="AC005770">
    <property type="protein sequence ID" value="AAC79629.1"/>
    <property type="molecule type" value="Genomic_DNA"/>
</dbReference>
<dbReference type="EMBL" id="CP002685">
    <property type="protein sequence ID" value="AEC09626.1"/>
    <property type="molecule type" value="Genomic_DNA"/>
</dbReference>
<dbReference type="EMBL" id="AY057559">
    <property type="protein sequence ID" value="AAL09798.1"/>
    <property type="molecule type" value="mRNA"/>
</dbReference>
<dbReference type="EMBL" id="AY045690">
    <property type="protein sequence ID" value="AAK74048.1"/>
    <property type="molecule type" value="mRNA"/>
</dbReference>
<dbReference type="EMBL" id="AY054142">
    <property type="protein sequence ID" value="AAL06803.1"/>
    <property type="molecule type" value="mRNA"/>
</dbReference>
<dbReference type="PIR" id="A84812">
    <property type="entry name" value="A84812"/>
</dbReference>
<dbReference type="RefSeq" id="NP_181434.1">
    <property type="nucleotide sequence ID" value="NM_129458.3"/>
</dbReference>
<dbReference type="SMR" id="Q9ZV07"/>
<dbReference type="BioGRID" id="3826">
    <property type="interactions" value="7"/>
</dbReference>
<dbReference type="FunCoup" id="Q9ZV07">
    <property type="interactions" value="147"/>
</dbReference>
<dbReference type="IntAct" id="Q9ZV07">
    <property type="interactions" value="4"/>
</dbReference>
<dbReference type="STRING" id="3702.Q9ZV07"/>
<dbReference type="TCDB" id="1.A.8.11.5">
    <property type="family name" value="the major intrinsic protein (mip) family"/>
</dbReference>
<dbReference type="iPTMnet" id="Q9ZV07"/>
<dbReference type="PaxDb" id="3702-AT2G39010.1"/>
<dbReference type="ProteomicsDB" id="235025"/>
<dbReference type="EnsemblPlants" id="AT2G39010.1">
    <property type="protein sequence ID" value="AT2G39010.1"/>
    <property type="gene ID" value="AT2G39010"/>
</dbReference>
<dbReference type="GeneID" id="818487"/>
<dbReference type="Gramene" id="AT2G39010.1">
    <property type="protein sequence ID" value="AT2G39010.1"/>
    <property type="gene ID" value="AT2G39010"/>
</dbReference>
<dbReference type="KEGG" id="ath:AT2G39010"/>
<dbReference type="Araport" id="AT2G39010"/>
<dbReference type="TAIR" id="AT2G39010">
    <property type="gene designation" value="PIP2E"/>
</dbReference>
<dbReference type="eggNOG" id="KOG0223">
    <property type="taxonomic scope" value="Eukaryota"/>
</dbReference>
<dbReference type="HOGENOM" id="CLU_020019_3_0_1"/>
<dbReference type="InParanoid" id="Q9ZV07"/>
<dbReference type="OMA" id="ASVYHHA"/>
<dbReference type="OrthoDB" id="3222at2759"/>
<dbReference type="PhylomeDB" id="Q9ZV07"/>
<dbReference type="PRO" id="PR:Q9ZV07"/>
<dbReference type="Proteomes" id="UP000006548">
    <property type="component" value="Chromosome 2"/>
</dbReference>
<dbReference type="ExpressionAtlas" id="Q9ZV07">
    <property type="expression patterns" value="baseline and differential"/>
</dbReference>
<dbReference type="GO" id="GO:0005794">
    <property type="term" value="C:Golgi apparatus"/>
    <property type="evidence" value="ECO:0007005"/>
    <property type="project" value="TAIR"/>
</dbReference>
<dbReference type="GO" id="GO:0005886">
    <property type="term" value="C:plasma membrane"/>
    <property type="evidence" value="ECO:0007005"/>
    <property type="project" value="TAIR"/>
</dbReference>
<dbReference type="GO" id="GO:0003729">
    <property type="term" value="F:mRNA binding"/>
    <property type="evidence" value="ECO:0000314"/>
    <property type="project" value="TAIR"/>
</dbReference>
<dbReference type="GO" id="GO:0015250">
    <property type="term" value="F:water channel activity"/>
    <property type="evidence" value="ECO:0000250"/>
    <property type="project" value="TAIR"/>
</dbReference>
<dbReference type="GO" id="GO:0009624">
    <property type="term" value="P:response to nematode"/>
    <property type="evidence" value="ECO:0007007"/>
    <property type="project" value="TAIR"/>
</dbReference>
<dbReference type="CDD" id="cd00333">
    <property type="entry name" value="MIP"/>
    <property type="match status" value="1"/>
</dbReference>
<dbReference type="FunFam" id="1.20.1080.10:FF:000001">
    <property type="entry name" value="Probable aquaporin PIP1-2"/>
    <property type="match status" value="1"/>
</dbReference>
<dbReference type="Gene3D" id="1.20.1080.10">
    <property type="entry name" value="Glycerol uptake facilitator protein"/>
    <property type="match status" value="1"/>
</dbReference>
<dbReference type="InterPro" id="IPR023271">
    <property type="entry name" value="Aquaporin-like"/>
</dbReference>
<dbReference type="InterPro" id="IPR034294">
    <property type="entry name" value="Aquaporin_transptr"/>
</dbReference>
<dbReference type="InterPro" id="IPR000425">
    <property type="entry name" value="MIP"/>
</dbReference>
<dbReference type="InterPro" id="IPR022357">
    <property type="entry name" value="MIP_CS"/>
</dbReference>
<dbReference type="NCBIfam" id="TIGR00861">
    <property type="entry name" value="MIP"/>
    <property type="match status" value="1"/>
</dbReference>
<dbReference type="PANTHER" id="PTHR45687">
    <property type="entry name" value="AQUAPORIN OR AQUAGLYCEROPORIN RELATED"/>
    <property type="match status" value="1"/>
</dbReference>
<dbReference type="Pfam" id="PF00230">
    <property type="entry name" value="MIP"/>
    <property type="match status" value="1"/>
</dbReference>
<dbReference type="PRINTS" id="PR00783">
    <property type="entry name" value="MINTRINSICP"/>
</dbReference>
<dbReference type="SUPFAM" id="SSF81338">
    <property type="entry name" value="Aquaporin-like"/>
    <property type="match status" value="1"/>
</dbReference>
<dbReference type="PROSITE" id="PS00221">
    <property type="entry name" value="MIP"/>
    <property type="match status" value="1"/>
</dbReference>
<protein>
    <recommendedName>
        <fullName>Probable aquaporin PIP2-6</fullName>
    </recommendedName>
    <alternativeName>
        <fullName>Plasma membrane intrinsic protein 2-6</fullName>
        <shortName>AtPIP2;6</shortName>
    </alternativeName>
    <alternativeName>
        <fullName>Plasma membrane intrinsic protein 2e</fullName>
        <shortName>PIP2e</shortName>
    </alternativeName>
</protein>
<reference key="1">
    <citation type="journal article" date="1999" name="Nature">
        <title>Sequence and analysis of chromosome 2 of the plant Arabidopsis thaliana.</title>
        <authorList>
            <person name="Lin X."/>
            <person name="Kaul S."/>
            <person name="Rounsley S.D."/>
            <person name="Shea T.P."/>
            <person name="Benito M.-I."/>
            <person name="Town C.D."/>
            <person name="Fujii C.Y."/>
            <person name="Mason T.M."/>
            <person name="Bowman C.L."/>
            <person name="Barnstead M.E."/>
            <person name="Feldblyum T.V."/>
            <person name="Buell C.R."/>
            <person name="Ketchum K.A."/>
            <person name="Lee J.J."/>
            <person name="Ronning C.M."/>
            <person name="Koo H.L."/>
            <person name="Moffat K.S."/>
            <person name="Cronin L.A."/>
            <person name="Shen M."/>
            <person name="Pai G."/>
            <person name="Van Aken S."/>
            <person name="Umayam L."/>
            <person name="Tallon L.J."/>
            <person name="Gill J.E."/>
            <person name="Adams M.D."/>
            <person name="Carrera A.J."/>
            <person name="Creasy T.H."/>
            <person name="Goodman H.M."/>
            <person name="Somerville C.R."/>
            <person name="Copenhaver G.P."/>
            <person name="Preuss D."/>
            <person name="Nierman W.C."/>
            <person name="White O."/>
            <person name="Eisen J.A."/>
            <person name="Salzberg S.L."/>
            <person name="Fraser C.M."/>
            <person name="Venter J.C."/>
        </authorList>
    </citation>
    <scope>NUCLEOTIDE SEQUENCE [LARGE SCALE GENOMIC DNA]</scope>
    <source>
        <strain>cv. Columbia</strain>
    </source>
</reference>
<reference key="2">
    <citation type="journal article" date="2017" name="Plant J.">
        <title>Araport11: a complete reannotation of the Arabidopsis thaliana reference genome.</title>
        <authorList>
            <person name="Cheng C.Y."/>
            <person name="Krishnakumar V."/>
            <person name="Chan A.P."/>
            <person name="Thibaud-Nissen F."/>
            <person name="Schobel S."/>
            <person name="Town C.D."/>
        </authorList>
    </citation>
    <scope>GENOME REANNOTATION</scope>
    <source>
        <strain>cv. Columbia</strain>
    </source>
</reference>
<reference key="3">
    <citation type="journal article" date="2003" name="Science">
        <title>Empirical analysis of transcriptional activity in the Arabidopsis genome.</title>
        <authorList>
            <person name="Yamada K."/>
            <person name="Lim J."/>
            <person name="Dale J.M."/>
            <person name="Chen H."/>
            <person name="Shinn P."/>
            <person name="Palm C.J."/>
            <person name="Southwick A.M."/>
            <person name="Wu H.C."/>
            <person name="Kim C.J."/>
            <person name="Nguyen M."/>
            <person name="Pham P.K."/>
            <person name="Cheuk R.F."/>
            <person name="Karlin-Newmann G."/>
            <person name="Liu S.X."/>
            <person name="Lam B."/>
            <person name="Sakano H."/>
            <person name="Wu T."/>
            <person name="Yu G."/>
            <person name="Miranda M."/>
            <person name="Quach H.L."/>
            <person name="Tripp M."/>
            <person name="Chang C.H."/>
            <person name="Lee J.M."/>
            <person name="Toriumi M.J."/>
            <person name="Chan M.M."/>
            <person name="Tang C.C."/>
            <person name="Onodera C.S."/>
            <person name="Deng J.M."/>
            <person name="Akiyama K."/>
            <person name="Ansari Y."/>
            <person name="Arakawa T."/>
            <person name="Banh J."/>
            <person name="Banno F."/>
            <person name="Bowser L."/>
            <person name="Brooks S.Y."/>
            <person name="Carninci P."/>
            <person name="Chao Q."/>
            <person name="Choy N."/>
            <person name="Enju A."/>
            <person name="Goldsmith A.D."/>
            <person name="Gurjal M."/>
            <person name="Hansen N.F."/>
            <person name="Hayashizaki Y."/>
            <person name="Johnson-Hopson C."/>
            <person name="Hsuan V.W."/>
            <person name="Iida K."/>
            <person name="Karnes M."/>
            <person name="Khan S."/>
            <person name="Koesema E."/>
            <person name="Ishida J."/>
            <person name="Jiang P.X."/>
            <person name="Jones T."/>
            <person name="Kawai J."/>
            <person name="Kamiya A."/>
            <person name="Meyers C."/>
            <person name="Nakajima M."/>
            <person name="Narusaka M."/>
            <person name="Seki M."/>
            <person name="Sakurai T."/>
            <person name="Satou M."/>
            <person name="Tamse R."/>
            <person name="Vaysberg M."/>
            <person name="Wallender E.K."/>
            <person name="Wong C."/>
            <person name="Yamamura Y."/>
            <person name="Yuan S."/>
            <person name="Shinozaki K."/>
            <person name="Davis R.W."/>
            <person name="Theologis A."/>
            <person name="Ecker J.R."/>
        </authorList>
    </citation>
    <scope>NUCLEOTIDE SEQUENCE [LARGE SCALE MRNA]</scope>
    <source>
        <strain>cv. Columbia</strain>
    </source>
</reference>
<reference key="4">
    <citation type="journal article" date="2002" name="Genome Biol.">
        <title>From genome to function: the Arabidopsis aquaporins.</title>
        <authorList>
            <person name="Quigley F."/>
            <person name="Rosenberg J.M."/>
            <person name="Shachar-Hill Y."/>
            <person name="Bohnert H.J."/>
        </authorList>
    </citation>
    <scope>NOMENCLATURE</scope>
    <scope>TISSUE SPECIFICITY</scope>
</reference>
<reference key="5">
    <citation type="journal article" date="2007" name="Mol. Cell. Proteomics">
        <title>Temporal analysis of sucrose-induced phosphorylation changes in plasma membrane proteins of Arabidopsis.</title>
        <authorList>
            <person name="Niittylae T."/>
            <person name="Fuglsang A.T."/>
            <person name="Palmgren M.G."/>
            <person name="Frommer W.B."/>
            <person name="Schulze W.X."/>
        </authorList>
    </citation>
    <scope>IDENTIFICATION BY MASS SPECTROMETRY [LARGE SCALE ANALYSIS]</scope>
    <source>
        <tissue>Seedling</tissue>
    </source>
</reference>
<reference key="6">
    <citation type="journal article" date="2009" name="Plant Physiol.">
        <title>Large-scale Arabidopsis phosphoproteome profiling reveals novel chloroplast kinase substrates and phosphorylation networks.</title>
        <authorList>
            <person name="Reiland S."/>
            <person name="Messerli G."/>
            <person name="Baerenfaller K."/>
            <person name="Gerrits B."/>
            <person name="Endler A."/>
            <person name="Grossmann J."/>
            <person name="Gruissem W."/>
            <person name="Baginsky S."/>
        </authorList>
    </citation>
    <scope>PHOSPHORYLATION [LARGE SCALE ANALYSIS] AT THR-7 AND SER-11</scope>
    <scope>IDENTIFICATION BY MASS SPECTROMETRY [LARGE SCALE ANALYSIS]</scope>
</reference>
<keyword id="KW-0007">Acetylation</keyword>
<keyword id="KW-1003">Cell membrane</keyword>
<keyword id="KW-0472">Membrane</keyword>
<keyword id="KW-0597">Phosphoprotein</keyword>
<keyword id="KW-1185">Reference proteome</keyword>
<keyword id="KW-0677">Repeat</keyword>
<keyword id="KW-0812">Transmembrane</keyword>
<keyword id="KW-1133">Transmembrane helix</keyword>
<keyword id="KW-0813">Transport</keyword>